<feature type="chain" id="PRO_0000095042" description="Condensin complex subunit 3">
    <location>
        <begin position="1"/>
        <end position="1034"/>
    </location>
</feature>
<feature type="repeat" description="HEAT 1">
    <location>
        <begin position="95"/>
        <end position="132"/>
    </location>
</feature>
<feature type="repeat" description="HEAT 2">
    <location>
        <begin position="139"/>
        <end position="176"/>
    </location>
</feature>
<feature type="repeat" description="HEAT 3">
    <location>
        <begin position="178"/>
        <end position="213"/>
    </location>
</feature>
<feature type="repeat" description="HEAT 4">
    <location>
        <begin position="242"/>
        <end position="279"/>
    </location>
</feature>
<feature type="repeat" description="HEAT 5">
    <location>
        <begin position="281"/>
        <end position="317"/>
    </location>
</feature>
<feature type="repeat" description="HEAT 6">
    <location>
        <begin position="439"/>
        <end position="476"/>
    </location>
</feature>
<feature type="repeat" description="HEAT 7">
    <location>
        <begin position="618"/>
        <end position="655"/>
    </location>
</feature>
<feature type="repeat" description="HEAT 8">
    <location>
        <begin position="703"/>
        <end position="740"/>
    </location>
</feature>
<feature type="repeat" description="HEAT 9">
    <location>
        <begin position="785"/>
        <end position="823"/>
    </location>
</feature>
<feature type="repeat" description="HEAT 10">
    <location>
        <begin position="878"/>
        <end position="915"/>
    </location>
</feature>
<feature type="region of interest" description="Disordered" evidence="2">
    <location>
        <begin position="663"/>
        <end position="693"/>
    </location>
</feature>
<feature type="region of interest" description="Disordered" evidence="2">
    <location>
        <begin position="909"/>
        <end position="1034"/>
    </location>
</feature>
<feature type="compositionally biased region" description="Polar residues" evidence="2">
    <location>
        <begin position="663"/>
        <end position="672"/>
    </location>
</feature>
<feature type="compositionally biased region" description="Basic and acidic residues" evidence="2">
    <location>
        <begin position="909"/>
        <end position="949"/>
    </location>
</feature>
<feature type="compositionally biased region" description="Basic residues" evidence="2">
    <location>
        <begin position="964"/>
        <end position="984"/>
    </location>
</feature>
<feature type="compositionally biased region" description="Basic and acidic residues" evidence="2">
    <location>
        <begin position="985"/>
        <end position="999"/>
    </location>
</feature>
<feature type="sequence conflict" description="In Ref. 2; AAH41184." evidence="6" ref="2">
    <original>N</original>
    <variation>D</variation>
    <location>
        <position position="86"/>
    </location>
</feature>
<feature type="sequence conflict" description="In Ref. 2; AAH41184." evidence="6" ref="2">
    <original>R</original>
    <variation>S</variation>
    <location>
        <position position="370"/>
    </location>
</feature>
<feature type="sequence conflict" description="In Ref. 2; AAH41184." evidence="6" ref="2">
    <original>G</original>
    <variation>D</variation>
    <location>
        <position position="687"/>
    </location>
</feature>
<feature type="sequence conflict" description="In Ref. 2; AAH41184." evidence="6" ref="2">
    <original>V</original>
    <variation>A</variation>
    <location>
        <position position="732"/>
    </location>
</feature>
<feature type="sequence conflict" description="In Ref. 2; AAH41184." evidence="6" ref="2">
    <original>T</original>
    <variation>K</variation>
    <location>
        <position position="1021"/>
    </location>
</feature>
<proteinExistence type="evidence at protein level"/>
<gene>
    <name type="primary">ncapg</name>
    <name type="synonym">capg</name>
</gene>
<reference key="1">
    <citation type="submission" date="1998-12" db="EMBL/GenBank/DDBJ databases">
        <title>XCAP-G, the 130 kDa subunit of the Xenopus 13S condensin complex.</title>
        <authorList>
            <person name="Hirano T."/>
            <person name="Hirano M."/>
        </authorList>
    </citation>
    <scope>NUCLEOTIDE SEQUENCE [MRNA]</scope>
</reference>
<reference key="2">
    <citation type="submission" date="2002-12" db="EMBL/GenBank/DDBJ databases">
        <authorList>
            <consortium name="NIH - Xenopus Gene Collection (XGC) project"/>
        </authorList>
    </citation>
    <scope>NUCLEOTIDE SEQUENCE [LARGE SCALE MRNA]</scope>
    <source>
        <tissue>Embryo</tissue>
    </source>
</reference>
<reference key="3">
    <citation type="journal article" date="1997" name="Cell">
        <title>Condensins, chromosome condensation protein complexes containing XCAP-C, XCAP-E and a Xenopus homolog of the Drosophila Barren protein.</title>
        <authorList>
            <person name="Hirano T."/>
            <person name="Kobayashi R."/>
            <person name="Hirano M."/>
        </authorList>
    </citation>
    <scope>IDENTIFICATION IN A CONDENSIN COMPLEX WITH XCAP-C; XCAP-E; XCAP-D2 AND XCAP-G</scope>
</reference>
<reference key="4">
    <citation type="journal article" date="1998" name="Science">
        <title>Phosphorylation and activation of 13S condensin by Cdc2 in vitro.</title>
        <authorList>
            <person name="Kimura K."/>
            <person name="Hirano M."/>
            <person name="Kobayashi R."/>
            <person name="Hirano T."/>
        </authorList>
    </citation>
    <scope>FUNCTION OF THE CONDENSIN COMPLEX</scope>
    <scope>PHOSPHORYLATION BY CDK1</scope>
</reference>
<reference key="5">
    <citation type="journal article" date="1999" name="Cell">
        <title>13S condensin actively reconfigures DNA by introducing global positive writhe: implications for chromosome condensation.</title>
        <authorList>
            <person name="Kimura K."/>
            <person name="Rybenkov V.V."/>
            <person name="Crisona N.J."/>
            <person name="Hirano T."/>
            <person name="Cozzarelli N.R."/>
        </authorList>
    </citation>
    <scope>FUNCTION OF THE CONDENSIN COMPLEX</scope>
</reference>
<sequence length="1034" mass="115815">MVKEGKAMEIKEAFDLSQKAHQNHAKLVSSLRAAYNKTEDKSIFLEEFIHFLKFPLIVYRREPAVERVMDFVAKFVTSFHNSGGENEEEADEENSPVNCLFNFLLQSHGASSMAVRFRVCQLINKLLVNLPENAQIDDDLFDKIHDAMLIRLKDRVPNVRIQAVLALARLQDPSDPDCPVSNAYVHLLENDSNPEVRRAVLTCIAPSAKSLPKIVGRTMDVKEPVRKLAYQVLSEKVHIRALTIAQRVKLLQQGLNDRSAAVKDVIQKKLIQAWLQYSEGDVLDLLHRLDVENSPEVSLSALNALFSVSPVGELVQNCKNLDERKLIPVETLTPENVLYWRALCEHLKSKGDEGEAALENILPEPAVYARYLSSYLQTLPVLSEDQRADMTKIEDLMTKEFIGQQLILTIGCLDTSEEGGRKRLLAVLQEILVMQNTPTSLISSLAELLLFVLKDDDKRIQTVAEIISELREPIVTVDNPKDAAQSRKLQLKLADVKVQLIEAKQALEDSLTNEDYSRASELKEKVKELESLKTQLIKEAEEPEMKEIRVEKNDPETLLKCLIMCNELLKHLSLSKGLGGTLNEICESLILPGITNVHPSVRNMAVLCIGCCALQNKDFARQHLPLLLQILQLDEVKVKNSALNAVFDMLLLFGMDILKSKPTNPDDSQCKAQENADEDISEQEKPGSVDENLTNEEVQEETATVNGILHLFSGFLDSEIAEIRTETAEGLVKLMFSGRLISAKLLSRLILLWYNPVTEEDTKLRHCLGVFFPIFAYSCRSNQECFAEAFLPTLQTLFNAPASSPLADVDVANVAELLVDLTRPSGLNPQNKQSQDYQAAMVHDGLAIKICNEILKDPTAPDVRIYAKALCSLELSRENSTDLLPLLDCAVEDVTDKVCERAIEKVRSQLRSGREEHRVSKETEPQVSKETEDRTNLQENEEGKQKDEANCDENTDTVKEKAARGKATKGRRKGPAAAATRRKASKAEEAEAEMERQEESQCVPVNTRPSRRAKTAALEKTKKNLSKLLNEEAN</sequence>
<keyword id="KW-0131">Cell cycle</keyword>
<keyword id="KW-0132">Cell division</keyword>
<keyword id="KW-0158">Chromosome</keyword>
<keyword id="KW-0963">Cytoplasm</keyword>
<keyword id="KW-0226">DNA condensation</keyword>
<keyword id="KW-0498">Mitosis</keyword>
<keyword id="KW-0539">Nucleus</keyword>
<keyword id="KW-0597">Phosphoprotein</keyword>
<keyword id="KW-1185">Reference proteome</keyword>
<keyword id="KW-0677">Repeat</keyword>
<name>CND3_XENLA</name>
<comment type="function">
    <text evidence="3 5">Regulatory subunit of the condensin complex, a complex required for conversion of interphase chromatin into mitotic-like condense chromosomes. The condensin complex probably introduces positive supercoils into relaxed DNA in the presence of type I topoisomerases and converts nicked DNA into positive knotted forms in the presence of type II topoisomerase.</text>
</comment>
<comment type="subunit">
    <text evidence="4">Component of the condensin complex, which contains the XCAP-E/SMC2 and XCAP-C/SMC4 heterodimer, and three non SMC subunits that probably regulate the complex: XCAP-H/NCAPH, XCAP-D2/NCAPD2 and XCAP-G/NCAPG.</text>
</comment>
<comment type="subcellular location">
    <subcellularLocation>
        <location evidence="1">Nucleus</location>
    </subcellularLocation>
    <subcellularLocation>
        <location evidence="1">Cytoplasm</location>
    </subcellularLocation>
    <subcellularLocation>
        <location evidence="1">Chromosome</location>
    </subcellularLocation>
    <text evidence="1">In interphase cells, the majority of the condensin complex is found in the cytoplasm, while a minority of the complex is associated with chromatin. A subpopulation of the complex however remains associated with chromosome foci in interphase cells. During mitosis, most of the condensin complex is associated with the chromatin. At the onset of prophase, the regulatory subunits of the complex are phosphorylated by CDK1, leading to condensin's association with chromosome arms and to chromosome condensation. Dissociation from chromosomes is observed in late telophase (By similarity).</text>
</comment>
<comment type="PTM">
    <text evidence="5">Phosphorylated by cdk1. Its phosphorylation, as well as that of XCAP-D2 and XCAP-H subunits, activates the condensin complex and is required for chromosome condensation.</text>
</comment>
<comment type="similarity">
    <text evidence="6">Belongs to the CND3 (condensin subunit 3) family.</text>
</comment>
<organism>
    <name type="scientific">Xenopus laevis</name>
    <name type="common">African clawed frog</name>
    <dbReference type="NCBI Taxonomy" id="8355"/>
    <lineage>
        <taxon>Eukaryota</taxon>
        <taxon>Metazoa</taxon>
        <taxon>Chordata</taxon>
        <taxon>Craniata</taxon>
        <taxon>Vertebrata</taxon>
        <taxon>Euteleostomi</taxon>
        <taxon>Amphibia</taxon>
        <taxon>Batrachia</taxon>
        <taxon>Anura</taxon>
        <taxon>Pipoidea</taxon>
        <taxon>Pipidae</taxon>
        <taxon>Xenopodinae</taxon>
        <taxon>Xenopus</taxon>
        <taxon>Xenopus</taxon>
    </lineage>
</organism>
<evidence type="ECO:0000250" key="1"/>
<evidence type="ECO:0000256" key="2">
    <source>
        <dbReference type="SAM" id="MobiDB-lite"/>
    </source>
</evidence>
<evidence type="ECO:0000269" key="3">
    <source>
    </source>
</evidence>
<evidence type="ECO:0000269" key="4">
    <source>
    </source>
</evidence>
<evidence type="ECO:0000269" key="5">
    <source>
    </source>
</evidence>
<evidence type="ECO:0000305" key="6"/>
<dbReference type="EMBL" id="AF111423">
    <property type="protein sequence ID" value="AAD09819.1"/>
    <property type="molecule type" value="mRNA"/>
</dbReference>
<dbReference type="EMBL" id="BC041184">
    <property type="protein sequence ID" value="AAH41184.1"/>
    <property type="molecule type" value="mRNA"/>
</dbReference>
<dbReference type="PIR" id="T17458">
    <property type="entry name" value="T17458"/>
</dbReference>
<dbReference type="RefSeq" id="NP_001081856.1">
    <property type="nucleotide sequence ID" value="NM_001088387.1"/>
</dbReference>
<dbReference type="SMR" id="Q9YHB5"/>
<dbReference type="BioGRID" id="99423">
    <property type="interactions" value="4"/>
</dbReference>
<dbReference type="DNASU" id="398088"/>
<dbReference type="GeneID" id="398088"/>
<dbReference type="KEGG" id="xla:398088"/>
<dbReference type="AGR" id="Xenbase:XB-GENE-5783887"/>
<dbReference type="CTD" id="398088"/>
<dbReference type="Xenbase" id="XB-GENE-5783887">
    <property type="gene designation" value="ncapg.L"/>
</dbReference>
<dbReference type="OrthoDB" id="27187at2759"/>
<dbReference type="Proteomes" id="UP000186698">
    <property type="component" value="Chromosome 1L"/>
</dbReference>
<dbReference type="GO" id="GO:0000793">
    <property type="term" value="C:condensed chromosome"/>
    <property type="evidence" value="ECO:0000318"/>
    <property type="project" value="GO_Central"/>
</dbReference>
<dbReference type="GO" id="GO:0000796">
    <property type="term" value="C:condensin complex"/>
    <property type="evidence" value="ECO:0007669"/>
    <property type="project" value="InterPro"/>
</dbReference>
<dbReference type="GO" id="GO:0005737">
    <property type="term" value="C:cytoplasm"/>
    <property type="evidence" value="ECO:0000318"/>
    <property type="project" value="GO_Central"/>
</dbReference>
<dbReference type="GO" id="GO:0005829">
    <property type="term" value="C:cytosol"/>
    <property type="evidence" value="ECO:0000304"/>
    <property type="project" value="Reactome"/>
</dbReference>
<dbReference type="GO" id="GO:0005634">
    <property type="term" value="C:nucleus"/>
    <property type="evidence" value="ECO:0007669"/>
    <property type="project" value="UniProtKB-SubCell"/>
</dbReference>
<dbReference type="GO" id="GO:0051301">
    <property type="term" value="P:cell division"/>
    <property type="evidence" value="ECO:0007669"/>
    <property type="project" value="UniProtKB-KW"/>
</dbReference>
<dbReference type="GO" id="GO:0007076">
    <property type="term" value="P:mitotic chromosome condensation"/>
    <property type="evidence" value="ECO:0000318"/>
    <property type="project" value="GO_Central"/>
</dbReference>
<dbReference type="FunFam" id="1.25.10.10:FF:000461">
    <property type="entry name" value="Non-SMC condensin I complex, subunit G"/>
    <property type="match status" value="1"/>
</dbReference>
<dbReference type="Gene3D" id="1.25.10.10">
    <property type="entry name" value="Leucine-rich Repeat Variant"/>
    <property type="match status" value="2"/>
</dbReference>
<dbReference type="InterPro" id="IPR011989">
    <property type="entry name" value="ARM-like"/>
</dbReference>
<dbReference type="InterPro" id="IPR016024">
    <property type="entry name" value="ARM-type_fold"/>
</dbReference>
<dbReference type="InterPro" id="IPR027165">
    <property type="entry name" value="CND3"/>
</dbReference>
<dbReference type="InterPro" id="IPR025977">
    <property type="entry name" value="Cnd3_C"/>
</dbReference>
<dbReference type="PANTHER" id="PTHR14418:SF5">
    <property type="entry name" value="CONDENSIN COMPLEX SUBUNIT 3"/>
    <property type="match status" value="1"/>
</dbReference>
<dbReference type="PANTHER" id="PTHR14418">
    <property type="entry name" value="CONDENSIN COMPLEX SUBUNIT 3-RELATED"/>
    <property type="match status" value="1"/>
</dbReference>
<dbReference type="Pfam" id="PF12719">
    <property type="entry name" value="Cnd3"/>
    <property type="match status" value="1"/>
</dbReference>
<dbReference type="SUPFAM" id="SSF48371">
    <property type="entry name" value="ARM repeat"/>
    <property type="match status" value="1"/>
</dbReference>
<protein>
    <recommendedName>
        <fullName>Condensin complex subunit 3</fullName>
    </recommendedName>
    <alternativeName>
        <fullName>Chromosome assembly protein xCAP-G</fullName>
    </alternativeName>
    <alternativeName>
        <fullName>Chromosome-associated protein G</fullName>
    </alternativeName>
    <alternativeName>
        <fullName>Condensin subunit CAP-G</fullName>
    </alternativeName>
    <alternativeName>
        <fullName>Non-SMC condensin I complex subunit G</fullName>
    </alternativeName>
</protein>
<accession>Q9YHB5</accession>
<accession>Q8AVZ4</accession>